<proteinExistence type="inferred from homology"/>
<sequence length="252" mass="27761">MDVKSVLSNAFAMPITSPAFPMGPYRFINREFLIITYRTDPDKLRAVVPEPLEIGEPLVHYEFIRMPDSTGFGDYTESGQVIPVSYKGVAGGYTLAMYLDDHPPIAGGRELWGFPKKLANPVLAVHTDTLVGTLDYGPVRIATGTMGYKHRQLDLAQQKKRLETPNFLLKVIPHVDGTPRICELVRYYLQDIDLKGAWTGPAALELAPHALAPVAALPVLEVVEARHLIADLTLGLGEVVFDYLGQPQANAR</sequence>
<comment type="function">
    <text evidence="1">Catalyzes the conversion of acetoacetate to acetone and carbon dioxide.</text>
</comment>
<comment type="catalytic activity">
    <reaction evidence="1">
        <text>acetoacetate + H(+) = acetone + CO2</text>
        <dbReference type="Rhea" id="RHEA:19729"/>
        <dbReference type="ChEBI" id="CHEBI:13705"/>
        <dbReference type="ChEBI" id="CHEBI:15347"/>
        <dbReference type="ChEBI" id="CHEBI:15378"/>
        <dbReference type="ChEBI" id="CHEBI:16526"/>
        <dbReference type="EC" id="4.1.1.4"/>
    </reaction>
</comment>
<comment type="similarity">
    <text evidence="1">Belongs to the ADC family.</text>
</comment>
<protein>
    <recommendedName>
        <fullName evidence="1">Acetoacetate decarboxylase</fullName>
        <shortName evidence="1">AAD</shortName>
        <shortName evidence="1">ADC</shortName>
        <ecNumber evidence="1">4.1.1.4</ecNumber>
    </recommendedName>
</protein>
<organism>
    <name type="scientific">Paraburkholderia xenovorans (strain LB400)</name>
    <dbReference type="NCBI Taxonomy" id="266265"/>
    <lineage>
        <taxon>Bacteria</taxon>
        <taxon>Pseudomonadati</taxon>
        <taxon>Pseudomonadota</taxon>
        <taxon>Betaproteobacteria</taxon>
        <taxon>Burkholderiales</taxon>
        <taxon>Burkholderiaceae</taxon>
        <taxon>Paraburkholderia</taxon>
    </lineage>
</organism>
<keyword id="KW-0210">Decarboxylase</keyword>
<keyword id="KW-0456">Lyase</keyword>
<keyword id="KW-1185">Reference proteome</keyword>
<keyword id="KW-0704">Schiff base</keyword>
<name>ADC_PARXL</name>
<dbReference type="EC" id="4.1.1.4" evidence="1"/>
<dbReference type="EMBL" id="CP000270">
    <property type="protein sequence ID" value="ABE30060.1"/>
    <property type="molecule type" value="Genomic_DNA"/>
</dbReference>
<dbReference type="RefSeq" id="WP_011487770.1">
    <property type="nucleotide sequence ID" value="NC_007951.1"/>
</dbReference>
<dbReference type="SMR" id="Q141C9"/>
<dbReference type="STRING" id="266265.Bxe_A2916"/>
<dbReference type="KEGG" id="bxb:DR64_598"/>
<dbReference type="KEGG" id="bxe:Bxe_A2916"/>
<dbReference type="PATRIC" id="fig|266265.5.peg.1574"/>
<dbReference type="eggNOG" id="COG4689">
    <property type="taxonomic scope" value="Bacteria"/>
</dbReference>
<dbReference type="OrthoDB" id="1633687at2"/>
<dbReference type="Proteomes" id="UP000001817">
    <property type="component" value="Chromosome 1"/>
</dbReference>
<dbReference type="GO" id="GO:0047602">
    <property type="term" value="F:acetoacetate decarboxylase activity"/>
    <property type="evidence" value="ECO:0007669"/>
    <property type="project" value="UniProtKB-UniRule"/>
</dbReference>
<dbReference type="Gene3D" id="2.40.400.10">
    <property type="entry name" value="Acetoacetate decarboxylase-like"/>
    <property type="match status" value="1"/>
</dbReference>
<dbReference type="HAMAP" id="MF_00597">
    <property type="entry name" value="ADC"/>
    <property type="match status" value="1"/>
</dbReference>
<dbReference type="InterPro" id="IPR010451">
    <property type="entry name" value="Acetoacetate_decarboxylase"/>
</dbReference>
<dbReference type="InterPro" id="IPR023653">
    <property type="entry name" value="Acetoacetate_decarboxylase_bac"/>
</dbReference>
<dbReference type="InterPro" id="IPR023375">
    <property type="entry name" value="ADC_dom_sf"/>
</dbReference>
<dbReference type="NCBIfam" id="NF002614">
    <property type="entry name" value="PRK02265.1"/>
    <property type="match status" value="1"/>
</dbReference>
<dbReference type="Pfam" id="PF06314">
    <property type="entry name" value="ADC"/>
    <property type="match status" value="1"/>
</dbReference>
<dbReference type="SUPFAM" id="SSF160104">
    <property type="entry name" value="Acetoacetate decarboxylase-like"/>
    <property type="match status" value="1"/>
</dbReference>
<evidence type="ECO:0000255" key="1">
    <source>
        <dbReference type="HAMAP-Rule" id="MF_00597"/>
    </source>
</evidence>
<gene>
    <name evidence="1" type="primary">adc</name>
    <name type="ordered locus">Bxeno_A1522</name>
    <name type="ORF">Bxe_A2916</name>
</gene>
<reference key="1">
    <citation type="journal article" date="2006" name="Proc. Natl. Acad. Sci. U.S.A.">
        <title>Burkholderia xenovorans LB400 harbors a multi-replicon, 9.73-Mbp genome shaped for versatility.</title>
        <authorList>
            <person name="Chain P.S.G."/>
            <person name="Denef V.J."/>
            <person name="Konstantinidis K.T."/>
            <person name="Vergez L.M."/>
            <person name="Agullo L."/>
            <person name="Reyes V.L."/>
            <person name="Hauser L."/>
            <person name="Cordova M."/>
            <person name="Gomez L."/>
            <person name="Gonzalez M."/>
            <person name="Land M."/>
            <person name="Lao V."/>
            <person name="Larimer F."/>
            <person name="LiPuma J.J."/>
            <person name="Mahenthiralingam E."/>
            <person name="Malfatti S.A."/>
            <person name="Marx C.J."/>
            <person name="Parnell J.J."/>
            <person name="Ramette A."/>
            <person name="Richardson P."/>
            <person name="Seeger M."/>
            <person name="Smith D."/>
            <person name="Spilker T."/>
            <person name="Sul W.J."/>
            <person name="Tsoi T.V."/>
            <person name="Ulrich L.E."/>
            <person name="Zhulin I.B."/>
            <person name="Tiedje J.M."/>
        </authorList>
    </citation>
    <scope>NUCLEOTIDE SEQUENCE [LARGE SCALE GENOMIC DNA]</scope>
    <source>
        <strain>LB400</strain>
    </source>
</reference>
<feature type="chain" id="PRO_1000025641" description="Acetoacetate decarboxylase">
    <location>
        <begin position="1"/>
        <end position="252"/>
    </location>
</feature>
<feature type="active site" description="Schiff-base intermediate with acetoacetate" evidence="1">
    <location>
        <position position="116"/>
    </location>
</feature>
<accession>Q141C9</accession>